<keyword id="KW-0002">3D-structure</keyword>
<keyword id="KW-0903">Direct protein sequencing</keyword>
<keyword id="KW-0348">Hemagglutinin</keyword>
<keyword id="KW-0430">Lectin</keyword>
<sequence>MTYTISIRVYQTTPKGFFRPVERTNWKYANGGTWDEVRGEYVLTMGGSGTSGSLRFVSSDTDESFVATFGVHNYKRWCDIVTNLTNEQTALVINQEYYGVPIRDQARENQLTSYNVANAKGRRFAIEYTVTEGDNLKANLIIG</sequence>
<accession>Q00022</accession>
<proteinExistence type="evidence at protein level"/>
<feature type="initiator methionine" description="Removed">
    <location>
        <position position="1"/>
    </location>
</feature>
<feature type="chain" id="PRO_0000223094" description="Agaricus bisporus lectin">
    <location>
        <begin position="2"/>
        <end position="143"/>
    </location>
</feature>
<feature type="binding site" evidence="1 10">
    <location>
        <position position="29"/>
    </location>
    <ligand>
        <name>beta-D-Gal-(1-&gt;3)-alpha-D-GalNAc</name>
        <dbReference type="ChEBI" id="CHEBI:61820"/>
    </ligand>
</feature>
<feature type="binding site" evidence="1 10">
    <location>
        <position position="48"/>
    </location>
    <ligand>
        <name>beta-D-Gal-(1-&gt;3)-alpha-D-GalNAc</name>
        <dbReference type="ChEBI" id="CHEBI:61820"/>
    </ligand>
</feature>
<feature type="binding site" evidence="1 10">
    <location>
        <position position="49"/>
    </location>
    <ligand>
        <name>beta-D-Gal-(1-&gt;3)-alpha-D-GalNAc</name>
        <dbReference type="ChEBI" id="CHEBI:61820"/>
    </ligand>
</feature>
<feature type="binding site" evidence="1 10">
    <location>
        <position position="73"/>
    </location>
    <ligand>
        <name>beta-D-Gal-(1-&gt;3)-alpha-D-GalNAc</name>
        <dbReference type="ChEBI" id="CHEBI:61820"/>
    </ligand>
</feature>
<feature type="binding site" evidence="1 10">
    <location>
        <position position="82"/>
    </location>
    <ligand>
        <name>N-acetyl-beta-D-glucosamine</name>
        <dbReference type="ChEBI" id="CHEBI:28009"/>
    </ligand>
</feature>
<feature type="binding site" evidence="1 10">
    <location>
        <position position="103"/>
    </location>
    <ligand>
        <name>N-acetyl-beta-D-glucosamine</name>
        <dbReference type="ChEBI" id="CHEBI:28009"/>
    </ligand>
</feature>
<feature type="binding site" evidence="1 10">
    <location>
        <position position="114"/>
    </location>
    <ligand>
        <name>N-acetyl-beta-D-glucosamine</name>
        <dbReference type="ChEBI" id="CHEBI:28009"/>
    </ligand>
</feature>
<feature type="sequence conflict" description="In Ref. 1; AAA85813." evidence="5" ref="1">
    <original>S</original>
    <variation>I</variation>
    <location>
        <position position="64"/>
    </location>
</feature>
<feature type="sequence conflict" description="In Ref. 1; AA sequence." evidence="5" ref="1">
    <original>DNLKANLIIG</original>
    <variation>IISRPISSSDKCFIRLPSQKS</variation>
    <location>
        <begin position="134"/>
        <end position="143"/>
    </location>
</feature>
<feature type="strand" evidence="11">
    <location>
        <begin position="3"/>
        <end position="11"/>
    </location>
</feature>
<feature type="strand" evidence="11">
    <location>
        <begin position="14"/>
        <end position="16"/>
    </location>
</feature>
<feature type="strand" evidence="11">
    <location>
        <begin position="19"/>
        <end position="25"/>
    </location>
</feature>
<feature type="helix" evidence="11">
    <location>
        <begin position="28"/>
        <end position="30"/>
    </location>
</feature>
<feature type="strand" evidence="11">
    <location>
        <begin position="33"/>
        <end position="37"/>
    </location>
</feature>
<feature type="strand" evidence="11">
    <location>
        <begin position="40"/>
        <end position="49"/>
    </location>
</feature>
<feature type="strand" evidence="11">
    <location>
        <begin position="51"/>
        <end position="58"/>
    </location>
</feature>
<feature type="turn" evidence="11">
    <location>
        <begin position="59"/>
        <end position="62"/>
    </location>
</feature>
<feature type="strand" evidence="11">
    <location>
        <begin position="63"/>
        <end position="72"/>
    </location>
</feature>
<feature type="strand" evidence="11">
    <location>
        <begin position="75"/>
        <end position="83"/>
    </location>
</feature>
<feature type="helix" evidence="11">
    <location>
        <begin position="90"/>
        <end position="96"/>
    </location>
</feature>
<feature type="turn" evidence="11">
    <location>
        <begin position="97"/>
        <end position="99"/>
    </location>
</feature>
<feature type="helix" evidence="11">
    <location>
        <begin position="101"/>
        <end position="108"/>
    </location>
</feature>
<feature type="strand" evidence="11">
    <location>
        <begin position="112"/>
        <end position="117"/>
    </location>
</feature>
<feature type="strand" evidence="11">
    <location>
        <begin position="123"/>
        <end position="130"/>
    </location>
</feature>
<feature type="strand" evidence="11">
    <location>
        <begin position="132"/>
        <end position="142"/>
    </location>
</feature>
<evidence type="ECO:0000269" key="1">
    <source>
    </source>
</evidence>
<evidence type="ECO:0000269" key="2">
    <source>
    </source>
</evidence>
<evidence type="ECO:0000269" key="3">
    <source>
    </source>
</evidence>
<evidence type="ECO:0000269" key="4">
    <source>
    </source>
</evidence>
<evidence type="ECO:0000305" key="5"/>
<evidence type="ECO:0007744" key="6">
    <source>
        <dbReference type="PDB" id="1Y2T"/>
    </source>
</evidence>
<evidence type="ECO:0007744" key="7">
    <source>
        <dbReference type="PDB" id="1Y2U"/>
    </source>
</evidence>
<evidence type="ECO:0007744" key="8">
    <source>
        <dbReference type="PDB" id="1Y2V"/>
    </source>
</evidence>
<evidence type="ECO:0007744" key="9">
    <source>
        <dbReference type="PDB" id="1Y2W"/>
    </source>
</evidence>
<evidence type="ECO:0007744" key="10">
    <source>
        <dbReference type="PDB" id="1Y2X"/>
    </source>
</evidence>
<evidence type="ECO:0007829" key="11">
    <source>
        <dbReference type="PDB" id="1Y2T"/>
    </source>
</evidence>
<name>ABL_AGABI</name>
<organism>
    <name type="scientific">Agaricus bisporus</name>
    <name type="common">White button mushroom</name>
    <dbReference type="NCBI Taxonomy" id="5341"/>
    <lineage>
        <taxon>Eukaryota</taxon>
        <taxon>Fungi</taxon>
        <taxon>Dikarya</taxon>
        <taxon>Basidiomycota</taxon>
        <taxon>Agaricomycotina</taxon>
        <taxon>Agaricomycetes</taxon>
        <taxon>Agaricomycetidae</taxon>
        <taxon>Agaricales</taxon>
        <taxon>Agaricineae</taxon>
        <taxon>Agaricaceae</taxon>
        <taxon>Agaricus</taxon>
    </lineage>
</organism>
<protein>
    <recommendedName>
        <fullName>Agaricus bisporus lectin</fullName>
        <shortName>ABL</shortName>
    </recommendedName>
    <alternativeName>
        <fullName>Agaricus bisporus agglutinin</fullName>
        <shortName>ABA</shortName>
    </alternativeName>
    <alternativeName>
        <fullName>Gal-beta-1,3-GalNAc-binding lectin</fullName>
    </alternativeName>
    <alternativeName>
        <fullName>TF antigen-binding lectin</fullName>
    </alternativeName>
</protein>
<reference key="1">
    <citation type="journal article" date="1995" name="Plant Physiol.">
        <title>Isolation and characterization of a cDNA clone encoding a lectin gene from Agaricus bisporus.</title>
        <authorList>
            <person name="Crenshaw R.W."/>
            <person name="Harper S.N."/>
            <person name="Moyer M."/>
            <person name="Privalle L.S."/>
        </authorList>
    </citation>
    <scope>NUCLEOTIDE SEQUENCE [MRNA]</scope>
    <scope>PARTIAL PROTEIN SEQUENCE</scope>
    <source>
        <tissue>Fruiting body</tissue>
    </source>
</reference>
<reference key="2">
    <citation type="journal article" date="1972" name="J. Biol. Chem.">
        <title>Characterization of the cell surface receptor for the Agaricus bisporus hemagglutinin.</title>
        <authorList>
            <person name="Presant C.A."/>
            <person name="Kornfeld S."/>
        </authorList>
    </citation>
    <scope>FUNCTION</scope>
</reference>
<reference key="3">
    <citation type="journal article" date="1993" name="Cancer Res.">
        <title>Reversible inhibition of proliferation of epithelial cell lines by Agaricus bisporus (edible mushroom) lectin.</title>
        <authorList>
            <person name="Yu L.-G."/>
            <person name="Fernig D.G."/>
            <person name="Smith J.A."/>
            <person name="Milton J.D."/>
            <person name="Rhodes J.M."/>
        </authorList>
    </citation>
    <scope>FUNCTION</scope>
</reference>
<reference key="4">
    <citation type="journal article" date="1999" name="J. Biol. Chem.">
        <title>Edible mushroom (Agaricus bisporus) lectin, which reversibly inhibits epithelial cell proliferation, blocks nuclear localization sequence-dependent nuclear protein import.</title>
        <authorList>
            <person name="Yu L.-G."/>
            <person name="Fernig D.G."/>
            <person name="White M.R."/>
            <person name="Spiller D.G."/>
            <person name="Appleton P."/>
            <person name="Evans R.C."/>
            <person name="Grierson I."/>
            <person name="Smith J.A."/>
            <person name="Davies H."/>
            <person name="Gerasimenko O.V."/>
            <person name="Petersen O.H."/>
            <person name="Milton J.D."/>
            <person name="Rhodes J.M."/>
        </authorList>
    </citation>
    <scope>FUNCTION</scope>
</reference>
<reference evidence="6 7 8 9 10" key="5">
    <citation type="journal article" date="2005" name="J. Biol. Chem.">
        <title>The antineoplastic lectin of the common edible mushroom (Agaricus bisporus) has two binding sites, each specific for a different configuration at a single epimeric hydroxyl.</title>
        <authorList>
            <person name="Carrizo M.E."/>
            <person name="Capaldi S."/>
            <person name="Perduca M."/>
            <person name="Irazoqui F.J."/>
            <person name="Nores G.A."/>
            <person name="Monaco H.L."/>
        </authorList>
    </citation>
    <scope>X-RAY CRYSTALLOGRAPHY (1.5 ANGSTROMS) IN COMPLEX WITH CARBOHYDRATE</scope>
    <scope>SEQUENCE REVISION</scope>
    <scope>IDENTIFICATION BY MASS SPECTROMETRY</scope>
</reference>
<dbReference type="EMBL" id="U14936">
    <property type="protein sequence ID" value="AAA85813.1"/>
    <property type="status" value="ALT_FRAME"/>
    <property type="molecule type" value="mRNA"/>
</dbReference>
<dbReference type="PDB" id="1Y2T">
    <property type="method" value="X-ray"/>
    <property type="resolution" value="1.50 A"/>
    <property type="chains" value="A/B=2-133"/>
</dbReference>
<dbReference type="PDB" id="1Y2U">
    <property type="method" value="X-ray"/>
    <property type="resolution" value="1.85 A"/>
    <property type="chains" value="A/B=2-143"/>
</dbReference>
<dbReference type="PDB" id="1Y2V">
    <property type="method" value="X-ray"/>
    <property type="resolution" value="1.90 A"/>
    <property type="chains" value="A/B=2-143"/>
</dbReference>
<dbReference type="PDB" id="1Y2W">
    <property type="method" value="X-ray"/>
    <property type="resolution" value="1.74 A"/>
    <property type="chains" value="A/B=2-143"/>
</dbReference>
<dbReference type="PDB" id="1Y2X">
    <property type="method" value="X-ray"/>
    <property type="resolution" value="2.36 A"/>
    <property type="chains" value="A/B/C/D=2-143"/>
</dbReference>
<dbReference type="PDBsum" id="1Y2T"/>
<dbReference type="PDBsum" id="1Y2U"/>
<dbReference type="PDBsum" id="1Y2V"/>
<dbReference type="PDBsum" id="1Y2W"/>
<dbReference type="PDBsum" id="1Y2X"/>
<dbReference type="SMR" id="Q00022"/>
<dbReference type="UniLectin" id="Q00022"/>
<dbReference type="EvolutionaryTrace" id="Q00022"/>
<dbReference type="GO" id="GO:0030246">
    <property type="term" value="F:carbohydrate binding"/>
    <property type="evidence" value="ECO:0007669"/>
    <property type="project" value="UniProtKB-KW"/>
</dbReference>
<dbReference type="Gene3D" id="2.60.270.20">
    <property type="entry name" value="Cytolysin/lectin"/>
    <property type="match status" value="1"/>
</dbReference>
<dbReference type="InterPro" id="IPR015926">
    <property type="entry name" value="Cytolysin/lectin"/>
</dbReference>
<dbReference type="InterPro" id="IPR009960">
    <property type="entry name" value="Fruit_body_lectin_fun"/>
</dbReference>
<dbReference type="Pfam" id="PF07367">
    <property type="entry name" value="FB_lectin"/>
    <property type="match status" value="1"/>
</dbReference>
<dbReference type="SUPFAM" id="SSF63724">
    <property type="entry name" value="Cytolysin/lectin"/>
    <property type="match status" value="1"/>
</dbReference>
<comment type="function">
    <text evidence="2 3 4">Lectin that recognizes O-linked galactose-beta-1,3-N-acetylgalactosamine, a disaccharide (Thomsen-Friedenreich antigen or T-disaccharide), present on cell surface glycoproteins. Can also bind galactose-beta-1,3-N-acetylglucosamine. Does not bind monosaccharides. Can be internalized by clathrin-coated vesicles after binding to surface glycoproteins. After internalization it inhibits nuclear import of nuclear localization signal dependent proteins. Inhibits proliferation of malignant cells without cytotoxicity for normal cells.</text>
</comment>
<comment type="subunit">
    <text evidence="1">Homotetramer.</text>
</comment>
<comment type="biotechnology">
    <text>Lectins can be used to recognize and purifiy specific glycoproteins, and for the purification of cells with specific surface glycoproteins. Has potential as anti-proliferative agent. Sold under the name lectin from Agaricus bisporus by Sigma-Aldrich and under the name of Agaricus bisporus (Mushroom) agglutinin (ABA) by USBiological.</text>
</comment>
<comment type="miscellaneous">
    <text>Each monomer has 2 distinct carbohydrate binding sites, one for galactose-beta-1,3-N-acetylgalactosamine and another for galactose-beta-1,3-N-acetylglucosamine.</text>
</comment>
<comment type="similarity">
    <text evidence="5">Belongs to the fungal fruit body lectin family.</text>
</comment>
<comment type="sequence caution" evidence="5">
    <conflict type="frameshift">
        <sequence resource="EMBL-CDS" id="AAA85813"/>
    </conflict>
    <text>Frameshift correction allows the C-terminal sequence to be compatible with the results of mass spectrometry and X-ray crystallography.</text>
</comment>